<feature type="chain" id="PRO_1000197420" description="Undecaprenyl-diphosphatase">
    <location>
        <begin position="1"/>
        <end position="265"/>
    </location>
</feature>
<feature type="transmembrane region" description="Helical" evidence="1">
    <location>
        <begin position="38"/>
        <end position="58"/>
    </location>
</feature>
<feature type="transmembrane region" description="Helical" evidence="1">
    <location>
        <begin position="75"/>
        <end position="95"/>
    </location>
</feature>
<feature type="transmembrane region" description="Helical" evidence="1">
    <location>
        <begin position="108"/>
        <end position="128"/>
    </location>
</feature>
<feature type="transmembrane region" description="Helical" evidence="1">
    <location>
        <begin position="135"/>
        <end position="155"/>
    </location>
</feature>
<feature type="transmembrane region" description="Helical" evidence="1">
    <location>
        <begin position="181"/>
        <end position="201"/>
    </location>
</feature>
<feature type="transmembrane region" description="Helical" evidence="1">
    <location>
        <begin position="215"/>
        <end position="235"/>
    </location>
</feature>
<feature type="transmembrane region" description="Helical" evidence="1">
    <location>
        <begin position="244"/>
        <end position="264"/>
    </location>
</feature>
<proteinExistence type="inferred from homology"/>
<reference key="1">
    <citation type="journal article" date="2008" name="BMC Genomics">
        <title>Genome sequence and rapid evolution of the rice pathogen Xanthomonas oryzae pv. oryzae PXO99A.</title>
        <authorList>
            <person name="Salzberg S.L."/>
            <person name="Sommer D.D."/>
            <person name="Schatz M.C."/>
            <person name="Phillippy A.M."/>
            <person name="Rabinowicz P.D."/>
            <person name="Tsuge S."/>
            <person name="Furutani A."/>
            <person name="Ochiai H."/>
            <person name="Delcher A.L."/>
            <person name="Kelley D."/>
            <person name="Madupu R."/>
            <person name="Puiu D."/>
            <person name="Radune D."/>
            <person name="Shumway M."/>
            <person name="Trapnell C."/>
            <person name="Aparna G."/>
            <person name="Jha G."/>
            <person name="Pandey A."/>
            <person name="Patil P.B."/>
            <person name="Ishihara H."/>
            <person name="Meyer D.F."/>
            <person name="Szurek B."/>
            <person name="Verdier V."/>
            <person name="Koebnik R."/>
            <person name="Dow J.M."/>
            <person name="Ryan R.P."/>
            <person name="Hirata H."/>
            <person name="Tsuyumu S."/>
            <person name="Won Lee S."/>
            <person name="Seo Y.-S."/>
            <person name="Sriariyanum M."/>
            <person name="Ronald P.C."/>
            <person name="Sonti R.V."/>
            <person name="Van Sluys M.-A."/>
            <person name="Leach J.E."/>
            <person name="White F.F."/>
            <person name="Bogdanove A.J."/>
        </authorList>
    </citation>
    <scope>NUCLEOTIDE SEQUENCE [LARGE SCALE GENOMIC DNA]</scope>
    <source>
        <strain>PXO99A</strain>
    </source>
</reference>
<accession>B2SHN5</accession>
<keyword id="KW-0046">Antibiotic resistance</keyword>
<keyword id="KW-0997">Cell inner membrane</keyword>
<keyword id="KW-1003">Cell membrane</keyword>
<keyword id="KW-0133">Cell shape</keyword>
<keyword id="KW-0961">Cell wall biogenesis/degradation</keyword>
<keyword id="KW-0378">Hydrolase</keyword>
<keyword id="KW-0472">Membrane</keyword>
<keyword id="KW-0573">Peptidoglycan synthesis</keyword>
<keyword id="KW-0812">Transmembrane</keyword>
<keyword id="KW-1133">Transmembrane helix</keyword>
<comment type="function">
    <text evidence="1">Catalyzes the dephosphorylation of undecaprenyl diphosphate (UPP). Confers resistance to bacitracin.</text>
</comment>
<comment type="catalytic activity">
    <reaction evidence="1">
        <text>di-trans,octa-cis-undecaprenyl diphosphate + H2O = di-trans,octa-cis-undecaprenyl phosphate + phosphate + H(+)</text>
        <dbReference type="Rhea" id="RHEA:28094"/>
        <dbReference type="ChEBI" id="CHEBI:15377"/>
        <dbReference type="ChEBI" id="CHEBI:15378"/>
        <dbReference type="ChEBI" id="CHEBI:43474"/>
        <dbReference type="ChEBI" id="CHEBI:58405"/>
        <dbReference type="ChEBI" id="CHEBI:60392"/>
        <dbReference type="EC" id="3.6.1.27"/>
    </reaction>
</comment>
<comment type="subcellular location">
    <subcellularLocation>
        <location evidence="1">Cell inner membrane</location>
        <topology evidence="1">Multi-pass membrane protein</topology>
    </subcellularLocation>
</comment>
<comment type="miscellaneous">
    <text>Bacitracin is thought to be involved in the inhibition of peptidoglycan synthesis by sequestering undecaprenyl diphosphate, thereby reducing the pool of lipid carrier available.</text>
</comment>
<comment type="similarity">
    <text evidence="1">Belongs to the UppP family.</text>
</comment>
<dbReference type="EC" id="3.6.1.27" evidence="1"/>
<dbReference type="EMBL" id="CP000967">
    <property type="protein sequence ID" value="ACD56955.1"/>
    <property type="molecule type" value="Genomic_DNA"/>
</dbReference>
<dbReference type="RefSeq" id="WP_011260765.1">
    <property type="nucleotide sequence ID" value="NC_010717.2"/>
</dbReference>
<dbReference type="SMR" id="B2SHN5"/>
<dbReference type="KEGG" id="xop:PXO_03569"/>
<dbReference type="eggNOG" id="COG1968">
    <property type="taxonomic scope" value="Bacteria"/>
</dbReference>
<dbReference type="HOGENOM" id="CLU_060296_2_0_6"/>
<dbReference type="Proteomes" id="UP000001740">
    <property type="component" value="Chromosome"/>
</dbReference>
<dbReference type="GO" id="GO:0005886">
    <property type="term" value="C:plasma membrane"/>
    <property type="evidence" value="ECO:0007669"/>
    <property type="project" value="UniProtKB-SubCell"/>
</dbReference>
<dbReference type="GO" id="GO:0050380">
    <property type="term" value="F:undecaprenyl-diphosphatase activity"/>
    <property type="evidence" value="ECO:0007669"/>
    <property type="project" value="UniProtKB-UniRule"/>
</dbReference>
<dbReference type="GO" id="GO:0071555">
    <property type="term" value="P:cell wall organization"/>
    <property type="evidence" value="ECO:0007669"/>
    <property type="project" value="UniProtKB-KW"/>
</dbReference>
<dbReference type="GO" id="GO:0009252">
    <property type="term" value="P:peptidoglycan biosynthetic process"/>
    <property type="evidence" value="ECO:0007669"/>
    <property type="project" value="UniProtKB-KW"/>
</dbReference>
<dbReference type="GO" id="GO:0008360">
    <property type="term" value="P:regulation of cell shape"/>
    <property type="evidence" value="ECO:0007669"/>
    <property type="project" value="UniProtKB-KW"/>
</dbReference>
<dbReference type="GO" id="GO:0046677">
    <property type="term" value="P:response to antibiotic"/>
    <property type="evidence" value="ECO:0007669"/>
    <property type="project" value="UniProtKB-UniRule"/>
</dbReference>
<dbReference type="HAMAP" id="MF_01006">
    <property type="entry name" value="Undec_diphosphatase"/>
    <property type="match status" value="1"/>
</dbReference>
<dbReference type="InterPro" id="IPR003824">
    <property type="entry name" value="UppP"/>
</dbReference>
<dbReference type="NCBIfam" id="NF001390">
    <property type="entry name" value="PRK00281.1-4"/>
    <property type="match status" value="1"/>
</dbReference>
<dbReference type="PANTHER" id="PTHR30622">
    <property type="entry name" value="UNDECAPRENYL-DIPHOSPHATASE"/>
    <property type="match status" value="1"/>
</dbReference>
<dbReference type="PANTHER" id="PTHR30622:SF3">
    <property type="entry name" value="UNDECAPRENYL-DIPHOSPHATASE"/>
    <property type="match status" value="1"/>
</dbReference>
<dbReference type="Pfam" id="PF02673">
    <property type="entry name" value="BacA"/>
    <property type="match status" value="1"/>
</dbReference>
<sequence length="265" mass="28583">MSDLISALLLGILEGLTEFLPISSTGHLLIAEQWLGRRSDFFNIVIQAGAILAICLALRQRLWTLATGLGERDNRDYVLKVSVAFLVTAVVGLIVRKAGWQLPETLQPVAWALLIGGVWMLVAEHVAGKLPERDVVTWKVAIAVGLAQVVAGVFPGTSRSASTIFIAMLLGLSRRSAAADFVFMVGIPTMFAASGYALLEMYKEGGFGTEHWADVAVAFVAATITGFVVVKWLLSYIKKHRFTVFAVYRIVLGAALLLWLPAAAG</sequence>
<protein>
    <recommendedName>
        <fullName evidence="1">Undecaprenyl-diphosphatase</fullName>
        <ecNumber evidence="1">3.6.1.27</ecNumber>
    </recommendedName>
    <alternativeName>
        <fullName evidence="1">Bacitracin resistance protein</fullName>
    </alternativeName>
    <alternativeName>
        <fullName evidence="1">Undecaprenyl pyrophosphate phosphatase</fullName>
    </alternativeName>
</protein>
<name>UPPP_XANOP</name>
<evidence type="ECO:0000255" key="1">
    <source>
        <dbReference type="HAMAP-Rule" id="MF_01006"/>
    </source>
</evidence>
<organism>
    <name type="scientific">Xanthomonas oryzae pv. oryzae (strain PXO99A)</name>
    <dbReference type="NCBI Taxonomy" id="360094"/>
    <lineage>
        <taxon>Bacteria</taxon>
        <taxon>Pseudomonadati</taxon>
        <taxon>Pseudomonadota</taxon>
        <taxon>Gammaproteobacteria</taxon>
        <taxon>Lysobacterales</taxon>
        <taxon>Lysobacteraceae</taxon>
        <taxon>Xanthomonas</taxon>
    </lineage>
</organism>
<gene>
    <name evidence="1" type="primary">uppP</name>
    <name type="ordered locus">PXO_03569</name>
</gene>